<feature type="chain" id="PRO_0000142251" description="Imidazole glycerol phosphate synthase subunit HisF">
    <location>
        <begin position="1"/>
        <end position="253"/>
    </location>
</feature>
<feature type="active site" evidence="1">
    <location>
        <position position="11"/>
    </location>
</feature>
<feature type="active site" evidence="1">
    <location>
        <position position="130"/>
    </location>
</feature>
<reference key="1">
    <citation type="journal article" date="2002" name="Genome Res.">
        <title>A complete sequence of the T. tengcongensis genome.</title>
        <authorList>
            <person name="Bao Q."/>
            <person name="Tian Y."/>
            <person name="Li W."/>
            <person name="Xu Z."/>
            <person name="Xuan Z."/>
            <person name="Hu S."/>
            <person name="Dong W."/>
            <person name="Yang J."/>
            <person name="Chen Y."/>
            <person name="Xue Y."/>
            <person name="Xu Y."/>
            <person name="Lai X."/>
            <person name="Huang L."/>
            <person name="Dong X."/>
            <person name="Ma Y."/>
            <person name="Ling L."/>
            <person name="Tan H."/>
            <person name="Chen R."/>
            <person name="Wang J."/>
            <person name="Yu J."/>
            <person name="Yang H."/>
        </authorList>
    </citation>
    <scope>NUCLEOTIDE SEQUENCE [LARGE SCALE GENOMIC DNA]</scope>
    <source>
        <strain>DSM 15242 / JCM 11007 / NBRC 100824 / MB4</strain>
    </source>
</reference>
<proteinExistence type="inferred from homology"/>
<gene>
    <name evidence="1" type="primary">hisF</name>
    <name type="ordered locus">TTE2133</name>
</gene>
<protein>
    <recommendedName>
        <fullName evidence="1">Imidazole glycerol phosphate synthase subunit HisF</fullName>
        <ecNumber evidence="1">4.3.2.10</ecNumber>
    </recommendedName>
    <alternativeName>
        <fullName evidence="1">IGP synthase cyclase subunit</fullName>
    </alternativeName>
    <alternativeName>
        <fullName evidence="1">IGP synthase subunit HisF</fullName>
    </alternativeName>
    <alternativeName>
        <fullName evidence="1">ImGP synthase subunit HisF</fullName>
        <shortName evidence="1">IGPS subunit HisF</shortName>
    </alternativeName>
</protein>
<name>HIS6_CALS4</name>
<keyword id="KW-0028">Amino-acid biosynthesis</keyword>
<keyword id="KW-0963">Cytoplasm</keyword>
<keyword id="KW-0368">Histidine biosynthesis</keyword>
<keyword id="KW-0456">Lyase</keyword>
<keyword id="KW-1185">Reference proteome</keyword>
<dbReference type="EC" id="4.3.2.10" evidence="1"/>
<dbReference type="EMBL" id="AE008691">
    <property type="protein sequence ID" value="AAM25298.1"/>
    <property type="molecule type" value="Genomic_DNA"/>
</dbReference>
<dbReference type="RefSeq" id="WP_011026234.1">
    <property type="nucleotide sequence ID" value="NC_003869.1"/>
</dbReference>
<dbReference type="SMR" id="Q8R885"/>
<dbReference type="STRING" id="273068.TTE2133"/>
<dbReference type="KEGG" id="tte:TTE2133"/>
<dbReference type="eggNOG" id="COG0107">
    <property type="taxonomic scope" value="Bacteria"/>
</dbReference>
<dbReference type="HOGENOM" id="CLU_048577_4_0_9"/>
<dbReference type="OrthoDB" id="9781903at2"/>
<dbReference type="UniPathway" id="UPA00031">
    <property type="reaction ID" value="UER00010"/>
</dbReference>
<dbReference type="Proteomes" id="UP000000555">
    <property type="component" value="Chromosome"/>
</dbReference>
<dbReference type="GO" id="GO:0005737">
    <property type="term" value="C:cytoplasm"/>
    <property type="evidence" value="ECO:0007669"/>
    <property type="project" value="UniProtKB-SubCell"/>
</dbReference>
<dbReference type="GO" id="GO:0000107">
    <property type="term" value="F:imidazoleglycerol-phosphate synthase activity"/>
    <property type="evidence" value="ECO:0007669"/>
    <property type="project" value="UniProtKB-UniRule"/>
</dbReference>
<dbReference type="GO" id="GO:0016829">
    <property type="term" value="F:lyase activity"/>
    <property type="evidence" value="ECO:0007669"/>
    <property type="project" value="UniProtKB-KW"/>
</dbReference>
<dbReference type="GO" id="GO:0000105">
    <property type="term" value="P:L-histidine biosynthetic process"/>
    <property type="evidence" value="ECO:0007669"/>
    <property type="project" value="UniProtKB-UniRule"/>
</dbReference>
<dbReference type="CDD" id="cd04731">
    <property type="entry name" value="HisF"/>
    <property type="match status" value="1"/>
</dbReference>
<dbReference type="FunFam" id="3.20.20.70:FF:000006">
    <property type="entry name" value="Imidazole glycerol phosphate synthase subunit HisF"/>
    <property type="match status" value="1"/>
</dbReference>
<dbReference type="Gene3D" id="3.20.20.70">
    <property type="entry name" value="Aldolase class I"/>
    <property type="match status" value="1"/>
</dbReference>
<dbReference type="HAMAP" id="MF_01013">
    <property type="entry name" value="HisF"/>
    <property type="match status" value="1"/>
</dbReference>
<dbReference type="InterPro" id="IPR013785">
    <property type="entry name" value="Aldolase_TIM"/>
</dbReference>
<dbReference type="InterPro" id="IPR006062">
    <property type="entry name" value="His_biosynth"/>
</dbReference>
<dbReference type="InterPro" id="IPR004651">
    <property type="entry name" value="HisF"/>
</dbReference>
<dbReference type="InterPro" id="IPR050064">
    <property type="entry name" value="IGPS_HisA/HisF"/>
</dbReference>
<dbReference type="InterPro" id="IPR011060">
    <property type="entry name" value="RibuloseP-bd_barrel"/>
</dbReference>
<dbReference type="NCBIfam" id="TIGR00735">
    <property type="entry name" value="hisF"/>
    <property type="match status" value="1"/>
</dbReference>
<dbReference type="PANTHER" id="PTHR21235:SF2">
    <property type="entry name" value="IMIDAZOLE GLYCEROL PHOSPHATE SYNTHASE HISHF"/>
    <property type="match status" value="1"/>
</dbReference>
<dbReference type="PANTHER" id="PTHR21235">
    <property type="entry name" value="IMIDAZOLE GLYCEROL PHOSPHATE SYNTHASE SUBUNIT HISF/H IGP SYNTHASE SUBUNIT HISF/H"/>
    <property type="match status" value="1"/>
</dbReference>
<dbReference type="Pfam" id="PF00977">
    <property type="entry name" value="His_biosynth"/>
    <property type="match status" value="1"/>
</dbReference>
<dbReference type="SUPFAM" id="SSF51366">
    <property type="entry name" value="Ribulose-phoshate binding barrel"/>
    <property type="match status" value="1"/>
</dbReference>
<evidence type="ECO:0000255" key="1">
    <source>
        <dbReference type="HAMAP-Rule" id="MF_01013"/>
    </source>
</evidence>
<sequence length="253" mass="27517">MLAKRIIPCLDVKDGRVVKGINFVNLKDAGDPVEIAERYNELGADELVFLDITASYEKRKIMIDVVKRTSEKVFIPLTVGGGISDIDDIREVLKAGADKVSINTQAVKQPTLIRQAALRFGSQCVVVAIDAKKRPDGTGYNVYINGGRINTGLDAVEWAKKVKDLGAGEILLTSMDKDGTKDGYDIELTRLISEAVSIPVIASGGAGKPEHFKEVFTQGKADAALAASVFHYGELDIKELKRYLKDEGIPVRL</sequence>
<comment type="function">
    <text evidence="1">IGPS catalyzes the conversion of PRFAR and glutamine to IGP, AICAR and glutamate. The HisF subunit catalyzes the cyclization activity that produces IGP and AICAR from PRFAR using the ammonia provided by the HisH subunit.</text>
</comment>
<comment type="catalytic activity">
    <reaction evidence="1">
        <text>5-[(5-phospho-1-deoxy-D-ribulos-1-ylimino)methylamino]-1-(5-phospho-beta-D-ribosyl)imidazole-4-carboxamide + L-glutamine = D-erythro-1-(imidazol-4-yl)glycerol 3-phosphate + 5-amino-1-(5-phospho-beta-D-ribosyl)imidazole-4-carboxamide + L-glutamate + H(+)</text>
        <dbReference type="Rhea" id="RHEA:24793"/>
        <dbReference type="ChEBI" id="CHEBI:15378"/>
        <dbReference type="ChEBI" id="CHEBI:29985"/>
        <dbReference type="ChEBI" id="CHEBI:58278"/>
        <dbReference type="ChEBI" id="CHEBI:58359"/>
        <dbReference type="ChEBI" id="CHEBI:58475"/>
        <dbReference type="ChEBI" id="CHEBI:58525"/>
        <dbReference type="EC" id="4.3.2.10"/>
    </reaction>
</comment>
<comment type="pathway">
    <text evidence="1">Amino-acid biosynthesis; L-histidine biosynthesis; L-histidine from 5-phospho-alpha-D-ribose 1-diphosphate: step 5/9.</text>
</comment>
<comment type="subunit">
    <text evidence="1">Heterodimer of HisH and HisF.</text>
</comment>
<comment type="subcellular location">
    <subcellularLocation>
        <location evidence="1">Cytoplasm</location>
    </subcellularLocation>
</comment>
<comment type="similarity">
    <text evidence="1">Belongs to the HisA/HisF family.</text>
</comment>
<accession>Q8R885</accession>
<organism>
    <name type="scientific">Caldanaerobacter subterraneus subsp. tengcongensis (strain DSM 15242 / JCM 11007 / NBRC 100824 / MB4)</name>
    <name type="common">Thermoanaerobacter tengcongensis</name>
    <dbReference type="NCBI Taxonomy" id="273068"/>
    <lineage>
        <taxon>Bacteria</taxon>
        <taxon>Bacillati</taxon>
        <taxon>Bacillota</taxon>
        <taxon>Clostridia</taxon>
        <taxon>Thermoanaerobacterales</taxon>
        <taxon>Thermoanaerobacteraceae</taxon>
        <taxon>Caldanaerobacter</taxon>
    </lineage>
</organism>